<comment type="function">
    <text evidence="1 2">Transcription factor that binds to the octamer motif (5'-ATTTGCAT-3') (By similarity). Acts as a transcriptional activator when binding cooperatively with SOX4, SOX11, or SOX12 to gene promoters (By similarity). Acts as a transcriptional repressor of myelin-specific genes (By similarity).</text>
</comment>
<comment type="subcellular location">
    <subcellularLocation>
        <location evidence="2">Nucleus</location>
    </subcellularLocation>
</comment>
<comment type="tissue specificity">
    <text>Expressed in embryonal stem cells and in the developing brain.</text>
</comment>
<comment type="similarity">
    <text evidence="6">Belongs to the POU transcription factor family. Class-3 subfamily.</text>
</comment>
<gene>
    <name type="primary">POU3F1</name>
    <name type="synonym">OCT6</name>
    <name type="synonym">OTF6</name>
</gene>
<reference key="1">
    <citation type="journal article" date="1994" name="Mol. Cell. Biol.">
        <title>Oct-6: a regulator of keratinocyte gene expression in stratified squamous epithelia.</title>
        <authorList>
            <person name="Faus I."/>
            <person name="Hsu H.J."/>
            <person name="Fuchs E."/>
        </authorList>
    </citation>
    <scope>NUCLEOTIDE SEQUENCE [MRNA]</scope>
</reference>
<reference key="2">
    <citation type="journal article" date="2006" name="Nature">
        <title>The DNA sequence and biological annotation of human chromosome 1.</title>
        <authorList>
            <person name="Gregory S.G."/>
            <person name="Barlow K.F."/>
            <person name="McLay K.E."/>
            <person name="Kaul R."/>
            <person name="Swarbreck D."/>
            <person name="Dunham A."/>
            <person name="Scott C.E."/>
            <person name="Howe K.L."/>
            <person name="Woodfine K."/>
            <person name="Spencer C.C.A."/>
            <person name="Jones M.C."/>
            <person name="Gillson C."/>
            <person name="Searle S."/>
            <person name="Zhou Y."/>
            <person name="Kokocinski F."/>
            <person name="McDonald L."/>
            <person name="Evans R."/>
            <person name="Phillips K."/>
            <person name="Atkinson A."/>
            <person name="Cooper R."/>
            <person name="Jones C."/>
            <person name="Hall R.E."/>
            <person name="Andrews T.D."/>
            <person name="Lloyd C."/>
            <person name="Ainscough R."/>
            <person name="Almeida J.P."/>
            <person name="Ambrose K.D."/>
            <person name="Anderson F."/>
            <person name="Andrew R.W."/>
            <person name="Ashwell R.I.S."/>
            <person name="Aubin K."/>
            <person name="Babbage A.K."/>
            <person name="Bagguley C.L."/>
            <person name="Bailey J."/>
            <person name="Beasley H."/>
            <person name="Bethel G."/>
            <person name="Bird C.P."/>
            <person name="Bray-Allen S."/>
            <person name="Brown J.Y."/>
            <person name="Brown A.J."/>
            <person name="Buckley D."/>
            <person name="Burton J."/>
            <person name="Bye J."/>
            <person name="Carder C."/>
            <person name="Chapman J.C."/>
            <person name="Clark S.Y."/>
            <person name="Clarke G."/>
            <person name="Clee C."/>
            <person name="Cobley V."/>
            <person name="Collier R.E."/>
            <person name="Corby N."/>
            <person name="Coville G.J."/>
            <person name="Davies J."/>
            <person name="Deadman R."/>
            <person name="Dunn M."/>
            <person name="Earthrowl M."/>
            <person name="Ellington A.G."/>
            <person name="Errington H."/>
            <person name="Frankish A."/>
            <person name="Frankland J."/>
            <person name="French L."/>
            <person name="Garner P."/>
            <person name="Garnett J."/>
            <person name="Gay L."/>
            <person name="Ghori M.R.J."/>
            <person name="Gibson R."/>
            <person name="Gilby L.M."/>
            <person name="Gillett W."/>
            <person name="Glithero R.J."/>
            <person name="Grafham D.V."/>
            <person name="Griffiths C."/>
            <person name="Griffiths-Jones S."/>
            <person name="Grocock R."/>
            <person name="Hammond S."/>
            <person name="Harrison E.S.I."/>
            <person name="Hart E."/>
            <person name="Haugen E."/>
            <person name="Heath P.D."/>
            <person name="Holmes S."/>
            <person name="Holt K."/>
            <person name="Howden P.J."/>
            <person name="Hunt A.R."/>
            <person name="Hunt S.E."/>
            <person name="Hunter G."/>
            <person name="Isherwood J."/>
            <person name="James R."/>
            <person name="Johnson C."/>
            <person name="Johnson D."/>
            <person name="Joy A."/>
            <person name="Kay M."/>
            <person name="Kershaw J.K."/>
            <person name="Kibukawa M."/>
            <person name="Kimberley A.M."/>
            <person name="King A."/>
            <person name="Knights A.J."/>
            <person name="Lad H."/>
            <person name="Laird G."/>
            <person name="Lawlor S."/>
            <person name="Leongamornlert D.A."/>
            <person name="Lloyd D.M."/>
            <person name="Loveland J."/>
            <person name="Lovell J."/>
            <person name="Lush M.J."/>
            <person name="Lyne R."/>
            <person name="Martin S."/>
            <person name="Mashreghi-Mohammadi M."/>
            <person name="Matthews L."/>
            <person name="Matthews N.S.W."/>
            <person name="McLaren S."/>
            <person name="Milne S."/>
            <person name="Mistry S."/>
            <person name="Moore M.J.F."/>
            <person name="Nickerson T."/>
            <person name="O'Dell C.N."/>
            <person name="Oliver K."/>
            <person name="Palmeiri A."/>
            <person name="Palmer S.A."/>
            <person name="Parker A."/>
            <person name="Patel D."/>
            <person name="Pearce A.V."/>
            <person name="Peck A.I."/>
            <person name="Pelan S."/>
            <person name="Phelps K."/>
            <person name="Phillimore B.J."/>
            <person name="Plumb R."/>
            <person name="Rajan J."/>
            <person name="Raymond C."/>
            <person name="Rouse G."/>
            <person name="Saenphimmachak C."/>
            <person name="Sehra H.K."/>
            <person name="Sheridan E."/>
            <person name="Shownkeen R."/>
            <person name="Sims S."/>
            <person name="Skuce C.D."/>
            <person name="Smith M."/>
            <person name="Steward C."/>
            <person name="Subramanian S."/>
            <person name="Sycamore N."/>
            <person name="Tracey A."/>
            <person name="Tromans A."/>
            <person name="Van Helmond Z."/>
            <person name="Wall M."/>
            <person name="Wallis J.M."/>
            <person name="White S."/>
            <person name="Whitehead S.L."/>
            <person name="Wilkinson J.E."/>
            <person name="Willey D.L."/>
            <person name="Williams H."/>
            <person name="Wilming L."/>
            <person name="Wray P.W."/>
            <person name="Wu Z."/>
            <person name="Coulson A."/>
            <person name="Vaudin M."/>
            <person name="Sulston J.E."/>
            <person name="Durbin R.M."/>
            <person name="Hubbard T."/>
            <person name="Wooster R."/>
            <person name="Dunham I."/>
            <person name="Carter N.P."/>
            <person name="McVean G."/>
            <person name="Ross M.T."/>
            <person name="Harrow J."/>
            <person name="Olson M.V."/>
            <person name="Beck S."/>
            <person name="Rogers J."/>
            <person name="Bentley D.R."/>
        </authorList>
    </citation>
    <scope>NUCLEOTIDE SEQUENCE [LARGE SCALE GENOMIC DNA]</scope>
</reference>
<reference key="3">
    <citation type="submission" date="2005-09" db="EMBL/GenBank/DDBJ databases">
        <authorList>
            <person name="Mural R.J."/>
            <person name="Istrail S."/>
            <person name="Sutton G.G."/>
            <person name="Florea L."/>
            <person name="Halpern A.L."/>
            <person name="Mobarry C.M."/>
            <person name="Lippert R."/>
            <person name="Walenz B."/>
            <person name="Shatkay H."/>
            <person name="Dew I."/>
            <person name="Miller J.R."/>
            <person name="Flanigan M.J."/>
            <person name="Edwards N.J."/>
            <person name="Bolanos R."/>
            <person name="Fasulo D."/>
            <person name="Halldorsson B.V."/>
            <person name="Hannenhalli S."/>
            <person name="Turner R."/>
            <person name="Yooseph S."/>
            <person name="Lu F."/>
            <person name="Nusskern D.R."/>
            <person name="Shue B.C."/>
            <person name="Zheng X.H."/>
            <person name="Zhong F."/>
            <person name="Delcher A.L."/>
            <person name="Huson D.H."/>
            <person name="Kravitz S.A."/>
            <person name="Mouchard L."/>
            <person name="Reinert K."/>
            <person name="Remington K.A."/>
            <person name="Clark A.G."/>
            <person name="Waterman M.S."/>
            <person name="Eichler E.E."/>
            <person name="Adams M.D."/>
            <person name="Hunkapiller M.W."/>
            <person name="Myers E.W."/>
            <person name="Venter J.C."/>
        </authorList>
    </citation>
    <scope>NUCLEOTIDE SEQUENCE [LARGE SCALE GENOMIC DNA]</scope>
</reference>
<reference key="4">
    <citation type="journal article" date="1993" name="Nucleic Acids Res.">
        <title>The human Oct-6 POU transcription factor lacks the first 50 amino acids of its murine counterpart.</title>
        <authorList>
            <person name="Tobler A."/>
            <person name="Schreiber E."/>
            <person name="Fontana A."/>
        </authorList>
    </citation>
    <scope>NUCLEOTIDE SEQUENCE [MRNA] OF 53-451</scope>
</reference>
<dbReference type="EMBL" id="L26494">
    <property type="protein sequence ID" value="AAA59965.1"/>
    <property type="molecule type" value="mRNA"/>
</dbReference>
<dbReference type="EMBL" id="AL139158">
    <property type="status" value="NOT_ANNOTATED_CDS"/>
    <property type="molecule type" value="Genomic_DNA"/>
</dbReference>
<dbReference type="EMBL" id="CH471059">
    <property type="protein sequence ID" value="EAX07298.1"/>
    <property type="molecule type" value="Genomic_DNA"/>
</dbReference>
<dbReference type="EMBL" id="Z18284">
    <property type="protein sequence ID" value="CAA79158.1"/>
    <property type="molecule type" value="mRNA"/>
</dbReference>
<dbReference type="CCDS" id="CCDS30679.1"/>
<dbReference type="PIR" id="A56018">
    <property type="entry name" value="A56018"/>
</dbReference>
<dbReference type="RefSeq" id="NP_002690.3">
    <property type="nucleotide sequence ID" value="NM_002699.3"/>
</dbReference>
<dbReference type="SMR" id="Q03052"/>
<dbReference type="BioGRID" id="111449">
    <property type="interactions" value="28"/>
</dbReference>
<dbReference type="DIP" id="DIP-277N"/>
<dbReference type="FunCoup" id="Q03052">
    <property type="interactions" value="1422"/>
</dbReference>
<dbReference type="IntAct" id="Q03052">
    <property type="interactions" value="13"/>
</dbReference>
<dbReference type="STRING" id="9606.ENSP00000362103"/>
<dbReference type="GlyGen" id="Q03052">
    <property type="glycosylation" value="1 site, 1 O-linked glycan (1 site)"/>
</dbReference>
<dbReference type="iPTMnet" id="Q03052"/>
<dbReference type="PhosphoSitePlus" id="Q03052"/>
<dbReference type="BioMuta" id="POU3F1"/>
<dbReference type="DMDM" id="218512119"/>
<dbReference type="jPOST" id="Q03052"/>
<dbReference type="MassIVE" id="Q03052"/>
<dbReference type="PaxDb" id="9606-ENSP00000362103"/>
<dbReference type="PeptideAtlas" id="Q03052"/>
<dbReference type="ProteomicsDB" id="58162"/>
<dbReference type="Pumba" id="Q03052"/>
<dbReference type="Antibodypedia" id="17662">
    <property type="antibodies" value="266 antibodies from 34 providers"/>
</dbReference>
<dbReference type="DNASU" id="5453"/>
<dbReference type="Ensembl" id="ENST00000373012.5">
    <property type="protein sequence ID" value="ENSP00000362103.2"/>
    <property type="gene ID" value="ENSG00000185668.8"/>
</dbReference>
<dbReference type="GeneID" id="5453"/>
<dbReference type="KEGG" id="hsa:5453"/>
<dbReference type="MANE-Select" id="ENST00000373012.5">
    <property type="protein sequence ID" value="ENSP00000362103.2"/>
    <property type="RefSeq nucleotide sequence ID" value="NM_002699.4"/>
    <property type="RefSeq protein sequence ID" value="NP_002690.3"/>
</dbReference>
<dbReference type="UCSC" id="uc001ccp.2">
    <property type="organism name" value="human"/>
</dbReference>
<dbReference type="AGR" id="HGNC:9214"/>
<dbReference type="CTD" id="5453"/>
<dbReference type="DisGeNET" id="5453"/>
<dbReference type="GeneCards" id="POU3F1"/>
<dbReference type="HGNC" id="HGNC:9214">
    <property type="gene designation" value="POU3F1"/>
</dbReference>
<dbReference type="HPA" id="ENSG00000185668">
    <property type="expression patterns" value="Tissue enriched (skin)"/>
</dbReference>
<dbReference type="MIM" id="602479">
    <property type="type" value="gene"/>
</dbReference>
<dbReference type="neXtProt" id="NX_Q03052"/>
<dbReference type="OpenTargets" id="ENSG00000185668"/>
<dbReference type="PharmGKB" id="PA33538"/>
<dbReference type="VEuPathDB" id="HostDB:ENSG00000185668"/>
<dbReference type="eggNOG" id="KOG3802">
    <property type="taxonomic scope" value="Eukaryota"/>
</dbReference>
<dbReference type="GeneTree" id="ENSGT00940000163458"/>
<dbReference type="HOGENOM" id="CLU_013065_1_0_1"/>
<dbReference type="InParanoid" id="Q03052"/>
<dbReference type="OMA" id="AHHGSWA"/>
<dbReference type="OrthoDB" id="6358449at2759"/>
<dbReference type="PAN-GO" id="Q03052">
    <property type="GO annotations" value="3 GO annotations based on evolutionary models"/>
</dbReference>
<dbReference type="PhylomeDB" id="Q03052"/>
<dbReference type="TreeFam" id="TF316413"/>
<dbReference type="PathwayCommons" id="Q03052"/>
<dbReference type="Reactome" id="R-HSA-9619665">
    <property type="pathway name" value="EGR2 and SOX10-mediated initiation of Schwann cell myelination"/>
</dbReference>
<dbReference type="Reactome" id="R-HSA-9823739">
    <property type="pathway name" value="Formation of the anterior neural plate"/>
</dbReference>
<dbReference type="Reactome" id="R-HSA-9832991">
    <property type="pathway name" value="Formation of the posterior neural plate"/>
</dbReference>
<dbReference type="SignaLink" id="Q03052"/>
<dbReference type="SIGNOR" id="Q03052"/>
<dbReference type="BioGRID-ORCS" id="5453">
    <property type="hits" value="16 hits in 1168 CRISPR screens"/>
</dbReference>
<dbReference type="GeneWiki" id="POU3F1"/>
<dbReference type="GenomeRNAi" id="5453"/>
<dbReference type="Pharos" id="Q03052">
    <property type="development level" value="Tbio"/>
</dbReference>
<dbReference type="PRO" id="PR:Q03052"/>
<dbReference type="Proteomes" id="UP000005640">
    <property type="component" value="Chromosome 1"/>
</dbReference>
<dbReference type="RNAct" id="Q03052">
    <property type="molecule type" value="protein"/>
</dbReference>
<dbReference type="Bgee" id="ENSG00000185668">
    <property type="expression patterns" value="Expressed in skin of abdomen and 105 other cell types or tissues"/>
</dbReference>
<dbReference type="GO" id="GO:0000785">
    <property type="term" value="C:chromatin"/>
    <property type="evidence" value="ECO:0000247"/>
    <property type="project" value="NTNU_SB"/>
</dbReference>
<dbReference type="GO" id="GO:0005654">
    <property type="term" value="C:nucleoplasm"/>
    <property type="evidence" value="ECO:0000314"/>
    <property type="project" value="HPA"/>
</dbReference>
<dbReference type="GO" id="GO:0005634">
    <property type="term" value="C:nucleus"/>
    <property type="evidence" value="ECO:0000250"/>
    <property type="project" value="UniProtKB"/>
</dbReference>
<dbReference type="GO" id="GO:0005667">
    <property type="term" value="C:transcription regulator complex"/>
    <property type="evidence" value="ECO:0007669"/>
    <property type="project" value="Ensembl"/>
</dbReference>
<dbReference type="GO" id="GO:0003700">
    <property type="term" value="F:DNA-binding transcription factor activity"/>
    <property type="evidence" value="ECO:0000304"/>
    <property type="project" value="ProtInc"/>
</dbReference>
<dbReference type="GO" id="GO:0000981">
    <property type="term" value="F:DNA-binding transcription factor activity, RNA polymerase II-specific"/>
    <property type="evidence" value="ECO:0000247"/>
    <property type="project" value="NTNU_SB"/>
</dbReference>
<dbReference type="GO" id="GO:0000978">
    <property type="term" value="F:RNA polymerase II cis-regulatory region sequence-specific DNA binding"/>
    <property type="evidence" value="ECO:0000318"/>
    <property type="project" value="GO_Central"/>
</dbReference>
<dbReference type="GO" id="GO:0043565">
    <property type="term" value="F:sequence-specific DNA binding"/>
    <property type="evidence" value="ECO:0000314"/>
    <property type="project" value="MGI"/>
</dbReference>
<dbReference type="GO" id="GO:1990837">
    <property type="term" value="F:sequence-specific double-stranded DNA binding"/>
    <property type="evidence" value="ECO:0000314"/>
    <property type="project" value="ARUK-UCL"/>
</dbReference>
<dbReference type="GO" id="GO:0008366">
    <property type="term" value="P:axon ensheathment"/>
    <property type="evidence" value="ECO:0000304"/>
    <property type="project" value="ProtInc"/>
</dbReference>
<dbReference type="GO" id="GO:0030900">
    <property type="term" value="P:forebrain development"/>
    <property type="evidence" value="ECO:0007669"/>
    <property type="project" value="Ensembl"/>
</dbReference>
<dbReference type="GO" id="GO:0030216">
    <property type="term" value="P:keratinocyte differentiation"/>
    <property type="evidence" value="ECO:0007669"/>
    <property type="project" value="Ensembl"/>
</dbReference>
<dbReference type="GO" id="GO:0022011">
    <property type="term" value="P:myelination in peripheral nervous system"/>
    <property type="evidence" value="ECO:0007669"/>
    <property type="project" value="Ensembl"/>
</dbReference>
<dbReference type="GO" id="GO:0045893">
    <property type="term" value="P:positive regulation of DNA-templated transcription"/>
    <property type="evidence" value="ECO:0000250"/>
    <property type="project" value="UniProtKB"/>
</dbReference>
<dbReference type="GO" id="GO:0010628">
    <property type="term" value="P:positive regulation of gene expression"/>
    <property type="evidence" value="ECO:0000250"/>
    <property type="project" value="UniProtKB"/>
</dbReference>
<dbReference type="GO" id="GO:0006357">
    <property type="term" value="P:regulation of transcription by RNA polymerase II"/>
    <property type="evidence" value="ECO:0000318"/>
    <property type="project" value="GO_Central"/>
</dbReference>
<dbReference type="CDD" id="cd00086">
    <property type="entry name" value="homeodomain"/>
    <property type="match status" value="1"/>
</dbReference>
<dbReference type="FunFam" id="1.10.10.60:FF:000005">
    <property type="entry name" value="POU domain protein"/>
    <property type="match status" value="1"/>
</dbReference>
<dbReference type="FunFam" id="1.10.260.40:FF:000001">
    <property type="entry name" value="POU domain protein"/>
    <property type="match status" value="1"/>
</dbReference>
<dbReference type="Gene3D" id="1.10.10.60">
    <property type="entry name" value="Homeodomain-like"/>
    <property type="match status" value="1"/>
</dbReference>
<dbReference type="Gene3D" id="1.10.260.40">
    <property type="entry name" value="lambda repressor-like DNA-binding domains"/>
    <property type="match status" value="1"/>
</dbReference>
<dbReference type="InterPro" id="IPR001356">
    <property type="entry name" value="HD"/>
</dbReference>
<dbReference type="InterPro" id="IPR017970">
    <property type="entry name" value="Homeobox_CS"/>
</dbReference>
<dbReference type="InterPro" id="IPR009057">
    <property type="entry name" value="Homeodomain-like_sf"/>
</dbReference>
<dbReference type="InterPro" id="IPR010982">
    <property type="entry name" value="Lambda_DNA-bd_dom_sf"/>
</dbReference>
<dbReference type="InterPro" id="IPR013847">
    <property type="entry name" value="POU"/>
</dbReference>
<dbReference type="InterPro" id="IPR000327">
    <property type="entry name" value="POU_dom"/>
</dbReference>
<dbReference type="InterPro" id="IPR050255">
    <property type="entry name" value="POU_domain_TF"/>
</dbReference>
<dbReference type="InterPro" id="IPR016362">
    <property type="entry name" value="TF_POU_3"/>
</dbReference>
<dbReference type="PANTHER" id="PTHR11636">
    <property type="entry name" value="POU DOMAIN"/>
    <property type="match status" value="1"/>
</dbReference>
<dbReference type="PANTHER" id="PTHR11636:SF75">
    <property type="entry name" value="POU DOMAIN, CLASS 3, TRANSCRIPTION FACTOR 1"/>
    <property type="match status" value="1"/>
</dbReference>
<dbReference type="Pfam" id="PF00046">
    <property type="entry name" value="Homeodomain"/>
    <property type="match status" value="1"/>
</dbReference>
<dbReference type="Pfam" id="PF00157">
    <property type="entry name" value="Pou"/>
    <property type="match status" value="1"/>
</dbReference>
<dbReference type="PIRSF" id="PIRSF002629">
    <property type="entry name" value="Transcription_factor_POU"/>
    <property type="match status" value="1"/>
</dbReference>
<dbReference type="PRINTS" id="PR00028">
    <property type="entry name" value="POUDOMAIN"/>
</dbReference>
<dbReference type="SMART" id="SM00389">
    <property type="entry name" value="HOX"/>
    <property type="match status" value="1"/>
</dbReference>
<dbReference type="SMART" id="SM00352">
    <property type="entry name" value="POU"/>
    <property type="match status" value="1"/>
</dbReference>
<dbReference type="SUPFAM" id="SSF46689">
    <property type="entry name" value="Homeodomain-like"/>
    <property type="match status" value="1"/>
</dbReference>
<dbReference type="SUPFAM" id="SSF47413">
    <property type="entry name" value="lambda repressor-like DNA-binding domains"/>
    <property type="match status" value="1"/>
</dbReference>
<dbReference type="PROSITE" id="PS00027">
    <property type="entry name" value="HOMEOBOX_1"/>
    <property type="match status" value="1"/>
</dbReference>
<dbReference type="PROSITE" id="PS50071">
    <property type="entry name" value="HOMEOBOX_2"/>
    <property type="match status" value="1"/>
</dbReference>
<dbReference type="PROSITE" id="PS00035">
    <property type="entry name" value="POU_1"/>
    <property type="match status" value="1"/>
</dbReference>
<dbReference type="PROSITE" id="PS00465">
    <property type="entry name" value="POU_2"/>
    <property type="match status" value="1"/>
</dbReference>
<dbReference type="PROSITE" id="PS51179">
    <property type="entry name" value="POU_3"/>
    <property type="match status" value="1"/>
</dbReference>
<sequence>MATTAQYLPRGPGGGAGGTGPLMHPDAAAAAAAAAAAERLHAGAAYREVQKLMHHEWLGAGAGHPVGLAHPQWLPTGGGGGGDWAGGPHLEHGKAGGGGTGRADDGGGGGGFHARLVHQGAAHAGAAWAQGSTAHHLGPAMSPSPGASGGHQPQPLGLYAQAAYPGGGGGGLAGMLAAGGGGAGPGLHHALHEDGHEAQLEPSPPPHLGAHGHAHGHAHAGGLHAAAAHLHPGAGGGGSSVGEHSDEDAPSSDDLEQFAKQFKQRRIKLGFTQADVGLALGTLYGNVFSQTTICRFEALQLSFKNMCKLKPLLNKWLEETDSSSGSPTNLDKIAAQGRKRKKRTSIEVGVKGALESHFLKCPKPSAHEITGLADSLQLEKEVVRVWFCNRRQKEKRMTPAAGAGHPPMDDVYAPGELGPGGGGASPPSAPPPPPPAALHHHHHHTLPGSVQ</sequence>
<organism>
    <name type="scientific">Homo sapiens</name>
    <name type="common">Human</name>
    <dbReference type="NCBI Taxonomy" id="9606"/>
    <lineage>
        <taxon>Eukaryota</taxon>
        <taxon>Metazoa</taxon>
        <taxon>Chordata</taxon>
        <taxon>Craniata</taxon>
        <taxon>Vertebrata</taxon>
        <taxon>Euteleostomi</taxon>
        <taxon>Mammalia</taxon>
        <taxon>Eutheria</taxon>
        <taxon>Euarchontoglires</taxon>
        <taxon>Primates</taxon>
        <taxon>Haplorrhini</taxon>
        <taxon>Catarrhini</taxon>
        <taxon>Hominidae</taxon>
        <taxon>Homo</taxon>
    </lineage>
</organism>
<evidence type="ECO:0000250" key="1">
    <source>
        <dbReference type="UniProtKB" id="P20267"/>
    </source>
</evidence>
<evidence type="ECO:0000250" key="2">
    <source>
        <dbReference type="UniProtKB" id="P21952"/>
    </source>
</evidence>
<evidence type="ECO:0000255" key="3">
    <source>
        <dbReference type="PROSITE-ProRule" id="PRU00108"/>
    </source>
</evidence>
<evidence type="ECO:0000255" key="4">
    <source>
        <dbReference type="PROSITE-ProRule" id="PRU00530"/>
    </source>
</evidence>
<evidence type="ECO:0000256" key="5">
    <source>
        <dbReference type="SAM" id="MobiDB-lite"/>
    </source>
</evidence>
<evidence type="ECO:0000305" key="6"/>
<protein>
    <recommendedName>
        <fullName>POU domain, class 3, transcription factor 1</fullName>
    </recommendedName>
    <alternativeName>
        <fullName>Octamer-binding protein 6</fullName>
        <shortName>Oct-6</shortName>
    </alternativeName>
    <alternativeName>
        <fullName>Octamer-binding transcription factor 6</fullName>
        <shortName>OTF-6</shortName>
    </alternativeName>
    <alternativeName>
        <fullName>POU domain transcription factor SCIP</fullName>
    </alternativeName>
</protein>
<keyword id="KW-0010">Activator</keyword>
<keyword id="KW-0238">DNA-binding</keyword>
<keyword id="KW-0371">Homeobox</keyword>
<keyword id="KW-0539">Nucleus</keyword>
<keyword id="KW-1267">Proteomics identification</keyword>
<keyword id="KW-1185">Reference proteome</keyword>
<keyword id="KW-0678">Repressor</keyword>
<keyword id="KW-0804">Transcription</keyword>
<keyword id="KW-0805">Transcription regulation</keyword>
<name>PO3F1_HUMAN</name>
<feature type="chain" id="PRO_0000100720" description="POU domain, class 3, transcription factor 1">
    <location>
        <begin position="1"/>
        <end position="451"/>
    </location>
</feature>
<feature type="domain" description="POU-specific" evidence="4">
    <location>
        <begin position="247"/>
        <end position="321"/>
    </location>
</feature>
<feature type="DNA-binding region" description="Homeobox" evidence="3">
    <location>
        <begin position="339"/>
        <end position="398"/>
    </location>
</feature>
<feature type="region of interest" description="Disordered" evidence="5">
    <location>
        <begin position="1"/>
        <end position="21"/>
    </location>
</feature>
<feature type="region of interest" description="Disordered" evidence="5">
    <location>
        <begin position="69"/>
        <end position="114"/>
    </location>
</feature>
<feature type="region of interest" description="Disordered" evidence="5">
    <location>
        <begin position="127"/>
        <end position="154"/>
    </location>
</feature>
<feature type="region of interest" description="Disordered" evidence="5">
    <location>
        <begin position="186"/>
        <end position="253"/>
    </location>
</feature>
<feature type="region of interest" description="Disordered" evidence="5">
    <location>
        <begin position="395"/>
        <end position="451"/>
    </location>
</feature>
<feature type="compositionally biased region" description="Gly residues" evidence="5">
    <location>
        <begin position="11"/>
        <end position="20"/>
    </location>
</feature>
<feature type="compositionally biased region" description="Gly residues" evidence="5">
    <location>
        <begin position="76"/>
        <end position="85"/>
    </location>
</feature>
<feature type="compositionally biased region" description="Gly residues" evidence="5">
    <location>
        <begin position="95"/>
        <end position="112"/>
    </location>
</feature>
<feature type="compositionally biased region" description="Basic and acidic residues" evidence="5">
    <location>
        <begin position="190"/>
        <end position="199"/>
    </location>
</feature>
<feature type="compositionally biased region" description="Low complexity" evidence="5">
    <location>
        <begin position="220"/>
        <end position="232"/>
    </location>
</feature>
<feature type="compositionally biased region" description="Pro residues" evidence="5">
    <location>
        <begin position="427"/>
        <end position="436"/>
    </location>
</feature>
<feature type="sequence conflict" description="In Ref. 1; AAA59965." evidence="6" ref="1">
    <location>
        <begin position="27"/>
        <end position="28"/>
    </location>
</feature>
<feature type="sequence conflict" description="In Ref. 1; AAA59965 and 4; CAA79158." evidence="6" ref="1 4">
    <original>GP</original>
    <variation>A</variation>
    <location>
        <begin position="87"/>
        <end position="88"/>
    </location>
</feature>
<accession>Q03052</accession>
<accession>Q5TAG2</accession>
<proteinExistence type="evidence at protein level"/>